<dbReference type="EMBL" id="CH236950">
    <property type="protein sequence ID" value="EAL24014.1"/>
    <property type="molecule type" value="Genomic_DNA"/>
</dbReference>
<dbReference type="EMBL" id="CH471070">
    <property type="protein sequence ID" value="EAW83986.1"/>
    <property type="molecule type" value="Genomic_DNA"/>
</dbReference>
<dbReference type="EMBL" id="BC137353">
    <property type="protein sequence ID" value="AAI37354.1"/>
    <property type="molecule type" value="mRNA"/>
</dbReference>
<dbReference type="EMBL" id="BC137354">
    <property type="protein sequence ID" value="AAI37355.1"/>
    <property type="molecule type" value="mRNA"/>
</dbReference>
<dbReference type="CCDS" id="CCDS34764.1"/>
<dbReference type="RefSeq" id="NP_001008271.2">
    <property type="nucleotide sequence ID" value="NM_001008270.3"/>
</dbReference>
<dbReference type="RefSeq" id="NP_001357332.1">
    <property type="nucleotide sequence ID" value="NM_001370403.1"/>
</dbReference>
<dbReference type="SMR" id="A4D1T9"/>
<dbReference type="BioGRID" id="126449">
    <property type="interactions" value="42"/>
</dbReference>
<dbReference type="FunCoup" id="A4D1T9">
    <property type="interactions" value="106"/>
</dbReference>
<dbReference type="IntAct" id="A4D1T9">
    <property type="interactions" value="14"/>
</dbReference>
<dbReference type="STRING" id="9606.ENSP00000297767"/>
<dbReference type="MEROPS" id="S01.989"/>
<dbReference type="BioMuta" id="PRSS37"/>
<dbReference type="MassIVE" id="A4D1T9"/>
<dbReference type="PaxDb" id="9606-ENSP00000297767"/>
<dbReference type="PeptideAtlas" id="A4D1T9"/>
<dbReference type="ProteomicsDB" id="631"/>
<dbReference type="Antibodypedia" id="18320">
    <property type="antibodies" value="22 antibodies from 11 providers"/>
</dbReference>
<dbReference type="DNASU" id="136242"/>
<dbReference type="Ensembl" id="ENST00000350549.8">
    <property type="protein sequence ID" value="ENSP00000297767.3"/>
    <property type="gene ID" value="ENSG00000165076.14"/>
</dbReference>
<dbReference type="Ensembl" id="ENST00000438520.1">
    <property type="protein sequence ID" value="ENSP00000414461.1"/>
    <property type="gene ID" value="ENSG00000165076.14"/>
</dbReference>
<dbReference type="GeneID" id="136242"/>
<dbReference type="KEGG" id="hsa:136242"/>
<dbReference type="MANE-Select" id="ENST00000350549.8">
    <property type="protein sequence ID" value="ENSP00000297767.3"/>
    <property type="RefSeq nucleotide sequence ID" value="NM_001008270.3"/>
    <property type="RefSeq protein sequence ID" value="NP_001008271.2"/>
</dbReference>
<dbReference type="UCSC" id="uc003vws.3">
    <property type="organism name" value="human"/>
</dbReference>
<dbReference type="AGR" id="HGNC:29211"/>
<dbReference type="CTD" id="136242"/>
<dbReference type="DisGeNET" id="136242"/>
<dbReference type="GeneCards" id="PRSS37"/>
<dbReference type="HGNC" id="HGNC:29211">
    <property type="gene designation" value="PRSS37"/>
</dbReference>
<dbReference type="HPA" id="ENSG00000165076">
    <property type="expression patterns" value="Tissue enriched (testis)"/>
</dbReference>
<dbReference type="neXtProt" id="NX_A4D1T9"/>
<dbReference type="OpenTargets" id="ENSG00000165076"/>
<dbReference type="PharmGKB" id="PA165618277"/>
<dbReference type="VEuPathDB" id="HostDB:ENSG00000165076"/>
<dbReference type="eggNOG" id="KOG3627">
    <property type="taxonomic scope" value="Eukaryota"/>
</dbReference>
<dbReference type="GeneTree" id="ENSGT00940000161483"/>
<dbReference type="HOGENOM" id="CLU_006842_1_6_1"/>
<dbReference type="InParanoid" id="A4D1T9"/>
<dbReference type="OMA" id="DKDCQKT"/>
<dbReference type="OrthoDB" id="5565075at2759"/>
<dbReference type="PAN-GO" id="A4D1T9">
    <property type="GO annotations" value="3 GO annotations based on evolutionary models"/>
</dbReference>
<dbReference type="PhylomeDB" id="A4D1T9"/>
<dbReference type="TreeFam" id="TF331065"/>
<dbReference type="PathwayCommons" id="A4D1T9"/>
<dbReference type="SignaLink" id="A4D1T9"/>
<dbReference type="BioGRID-ORCS" id="136242">
    <property type="hits" value="8 hits in 1140 CRISPR screens"/>
</dbReference>
<dbReference type="GenomeRNAi" id="136242"/>
<dbReference type="Pharos" id="A4D1T9">
    <property type="development level" value="Tdark"/>
</dbReference>
<dbReference type="PRO" id="PR:A4D1T9"/>
<dbReference type="Proteomes" id="UP000005640">
    <property type="component" value="Chromosome 7"/>
</dbReference>
<dbReference type="RNAct" id="A4D1T9">
    <property type="molecule type" value="protein"/>
</dbReference>
<dbReference type="Bgee" id="ENSG00000165076">
    <property type="expression patterns" value="Expressed in right testis and 80 other cell types or tissues"/>
</dbReference>
<dbReference type="ExpressionAtlas" id="A4D1T9">
    <property type="expression patterns" value="baseline and differential"/>
</dbReference>
<dbReference type="GO" id="GO:0001669">
    <property type="term" value="C:acrosomal vesicle"/>
    <property type="evidence" value="ECO:0000314"/>
    <property type="project" value="UniProtKB"/>
</dbReference>
<dbReference type="GO" id="GO:0005615">
    <property type="term" value="C:extracellular space"/>
    <property type="evidence" value="ECO:0000318"/>
    <property type="project" value="GO_Central"/>
</dbReference>
<dbReference type="GO" id="GO:0005634">
    <property type="term" value="C:nucleus"/>
    <property type="evidence" value="ECO:0007005"/>
    <property type="project" value="UniProtKB"/>
</dbReference>
<dbReference type="GO" id="GO:0007339">
    <property type="term" value="P:binding of sperm to zona pellucida"/>
    <property type="evidence" value="ECO:0000250"/>
    <property type="project" value="UniProtKB"/>
</dbReference>
<dbReference type="GO" id="GO:0016477">
    <property type="term" value="P:cell migration"/>
    <property type="evidence" value="ECO:0000250"/>
    <property type="project" value="UniProtKB"/>
</dbReference>
<dbReference type="GO" id="GO:0008354">
    <property type="term" value="P:germ cell migration"/>
    <property type="evidence" value="ECO:0007669"/>
    <property type="project" value="Ensembl"/>
</dbReference>
<dbReference type="GO" id="GO:2000344">
    <property type="term" value="P:positive regulation of acrosome reaction"/>
    <property type="evidence" value="ECO:0000315"/>
    <property type="project" value="UniProtKB"/>
</dbReference>
<dbReference type="GO" id="GO:1905516">
    <property type="term" value="P:positive regulation of fertilization"/>
    <property type="evidence" value="ECO:0000250"/>
    <property type="project" value="UniProtKB"/>
</dbReference>
<dbReference type="GO" id="GO:0051604">
    <property type="term" value="P:protein maturation"/>
    <property type="evidence" value="ECO:0000250"/>
    <property type="project" value="UniProtKB"/>
</dbReference>
<dbReference type="GO" id="GO:0006508">
    <property type="term" value="P:proteolysis"/>
    <property type="evidence" value="ECO:0007669"/>
    <property type="project" value="InterPro"/>
</dbReference>
<dbReference type="GO" id="GO:0070613">
    <property type="term" value="P:regulation of protein processing"/>
    <property type="evidence" value="ECO:0000315"/>
    <property type="project" value="UniProtKB"/>
</dbReference>
<dbReference type="FunFam" id="2.40.10.10:FF:000049">
    <property type="entry name" value="probable inactive serine protease 37"/>
    <property type="match status" value="1"/>
</dbReference>
<dbReference type="FunFam" id="2.40.10.10:FF:000005">
    <property type="entry name" value="Serine protease 37"/>
    <property type="match status" value="1"/>
</dbReference>
<dbReference type="Gene3D" id="2.40.10.10">
    <property type="entry name" value="Trypsin-like serine proteases"/>
    <property type="match status" value="2"/>
</dbReference>
<dbReference type="InterPro" id="IPR009003">
    <property type="entry name" value="Peptidase_S1_PA"/>
</dbReference>
<dbReference type="InterPro" id="IPR043504">
    <property type="entry name" value="Peptidase_S1_PA_chymotrypsin"/>
</dbReference>
<dbReference type="InterPro" id="IPR001314">
    <property type="entry name" value="Peptidase_S1A"/>
</dbReference>
<dbReference type="InterPro" id="IPR001254">
    <property type="entry name" value="Trypsin_dom"/>
</dbReference>
<dbReference type="PANTHER" id="PTHR24271:SF61">
    <property type="entry name" value="INACTIVE SERINE PROTEASE 37-RELATED"/>
    <property type="match status" value="1"/>
</dbReference>
<dbReference type="PANTHER" id="PTHR24271">
    <property type="entry name" value="KALLIKREIN-RELATED"/>
    <property type="match status" value="1"/>
</dbReference>
<dbReference type="Pfam" id="PF00089">
    <property type="entry name" value="Trypsin"/>
    <property type="match status" value="1"/>
</dbReference>
<dbReference type="PRINTS" id="PR00722">
    <property type="entry name" value="CHYMOTRYPSIN"/>
</dbReference>
<dbReference type="SMART" id="SM00020">
    <property type="entry name" value="Tryp_SPc"/>
    <property type="match status" value="1"/>
</dbReference>
<dbReference type="SUPFAM" id="SSF50494">
    <property type="entry name" value="Trypsin-like serine proteases"/>
    <property type="match status" value="1"/>
</dbReference>
<dbReference type="PROSITE" id="PS50240">
    <property type="entry name" value="TRYPSIN_DOM"/>
    <property type="match status" value="1"/>
</dbReference>
<feature type="signal peptide" evidence="2">
    <location>
        <begin position="1"/>
        <end position="19"/>
    </location>
</feature>
<feature type="chain" id="PRO_0000326070" description="Probable inactive serine protease 37">
    <location>
        <begin position="20"/>
        <end position="235"/>
    </location>
</feature>
<feature type="domain" description="Peptidase S1" evidence="3">
    <location>
        <begin position="20"/>
        <end position="233"/>
    </location>
</feature>
<feature type="disulfide bond" evidence="3">
    <location>
        <begin position="40"/>
        <end position="56"/>
    </location>
</feature>
<feature type="disulfide bond" evidence="3">
    <location>
        <begin position="131"/>
        <end position="198"/>
    </location>
</feature>
<feature type="disulfide bond" evidence="3">
    <location>
        <begin position="163"/>
        <end position="177"/>
    </location>
</feature>
<feature type="sequence variant" id="VAR_039985" description="In dbSNP:rs12669721.">
    <original>T</original>
    <variation>P</variation>
    <location>
        <position position="119"/>
    </location>
</feature>
<comment type="function">
    <text evidence="1 4">Plays a role in male fertility (By similarity). May have a role in sperm migration or binding to zona-intact eggs (By similarity). Involved in the activation of the proacrosin/acrosin system (PubMed:27649891).</text>
</comment>
<comment type="subcellular location">
    <subcellularLocation>
        <location evidence="4">Cytoplasmic vesicle</location>
        <location evidence="4">Secretory vesicle</location>
        <location evidence="4">Acrosome</location>
    </subcellularLocation>
    <subcellularLocation>
        <location evidence="5">Secreted</location>
    </subcellularLocation>
</comment>
<comment type="tissue specificity">
    <text evidence="4">Testis-specific (PubMed:27649891). Expressed in spermatids (at protein level) (PubMed:27649891).</text>
</comment>
<comment type="disease">
    <text evidence="4">Patients with unexplained male infertility (UMI) show a decrease in the number of sperm cells compared to fertile men (PubMed:27649891). Sperm exhibit also abnormal activation of the proacrosin/acrosin system and premature proteolysis of ADAM2 (PubMed:27649891).</text>
</comment>
<comment type="similarity">
    <text evidence="3">Belongs to the peptidase S1 family.</text>
</comment>
<comment type="caution">
    <text evidence="5">Although related to peptidase S1 family, lacks the conserved active Ser residue in position 192 which is replaced by an Ala, suggesting that it has no protease activity. Also lacks metal binding sites Glu in position 67 which is replaced by Asn, and Asn in position 69 which is replaced by Lys.</text>
</comment>
<accession>A4D1T9</accession>
<accession>B2RPB5</accession>
<sequence length="235" mass="26445">MKYVFYLGVLAGTFFFADSSVQKEDPAPYLVYLKSHFNPCVGVLIKPSWVLAPAHCYLPNLKVMLGNFKSRVRDGTEQTINPIQIVRYWNYSHSAPQDDLMLIKLAKPAMLNPKVQPLTLATTNVRPGTVCLLSGLDWSQENSGRHPDLRQNLEAPVMSDRECQKTEQGKSHRNSLCVKFVKVFSRIFGEVAVATVICKDKLQGIEVGHFMGGDVGIYTNVYKYVSWIENTAKDK</sequence>
<evidence type="ECO:0000250" key="1">
    <source>
        <dbReference type="UniProtKB" id="Q9DAA4"/>
    </source>
</evidence>
<evidence type="ECO:0000255" key="2"/>
<evidence type="ECO:0000255" key="3">
    <source>
        <dbReference type="PROSITE-ProRule" id="PRU00274"/>
    </source>
</evidence>
<evidence type="ECO:0000269" key="4">
    <source>
    </source>
</evidence>
<evidence type="ECO:0000305" key="5"/>
<evidence type="ECO:0000312" key="6">
    <source>
        <dbReference type="HGNC" id="HGNC:29211"/>
    </source>
</evidence>
<protein>
    <recommendedName>
        <fullName evidence="5">Probable inactive serine protease 37</fullName>
    </recommendedName>
    <alternativeName>
        <fullName>Probable inactive trypsin-X2</fullName>
    </alternativeName>
</protein>
<reference key="1">
    <citation type="journal article" date="2003" name="Science">
        <title>Human chromosome 7: DNA sequence and biology.</title>
        <authorList>
            <person name="Scherer S.W."/>
            <person name="Cheung J."/>
            <person name="MacDonald J.R."/>
            <person name="Osborne L.R."/>
            <person name="Nakabayashi K."/>
            <person name="Herbrick J.-A."/>
            <person name="Carson A.R."/>
            <person name="Parker-Katiraee L."/>
            <person name="Skaug J."/>
            <person name="Khaja R."/>
            <person name="Zhang J."/>
            <person name="Hudek A.K."/>
            <person name="Li M."/>
            <person name="Haddad M."/>
            <person name="Duggan G.E."/>
            <person name="Fernandez B.A."/>
            <person name="Kanematsu E."/>
            <person name="Gentles S."/>
            <person name="Christopoulos C.C."/>
            <person name="Choufani S."/>
            <person name="Kwasnicka D."/>
            <person name="Zheng X.H."/>
            <person name="Lai Z."/>
            <person name="Nusskern D.R."/>
            <person name="Zhang Q."/>
            <person name="Gu Z."/>
            <person name="Lu F."/>
            <person name="Zeesman S."/>
            <person name="Nowaczyk M.J."/>
            <person name="Teshima I."/>
            <person name="Chitayat D."/>
            <person name="Shuman C."/>
            <person name="Weksberg R."/>
            <person name="Zackai E.H."/>
            <person name="Grebe T.A."/>
            <person name="Cox S.R."/>
            <person name="Kirkpatrick S.J."/>
            <person name="Rahman N."/>
            <person name="Friedman J.M."/>
            <person name="Heng H.H.Q."/>
            <person name="Pelicci P.G."/>
            <person name="Lo-Coco F."/>
            <person name="Belloni E."/>
            <person name="Shaffer L.G."/>
            <person name="Pober B."/>
            <person name="Morton C.C."/>
            <person name="Gusella J.F."/>
            <person name="Bruns G.A.P."/>
            <person name="Korf B.R."/>
            <person name="Quade B.J."/>
            <person name="Ligon A.H."/>
            <person name="Ferguson H."/>
            <person name="Higgins A.W."/>
            <person name="Leach N.T."/>
            <person name="Herrick S.R."/>
            <person name="Lemyre E."/>
            <person name="Farra C.G."/>
            <person name="Kim H.-G."/>
            <person name="Summers A.M."/>
            <person name="Gripp K.W."/>
            <person name="Roberts W."/>
            <person name="Szatmari P."/>
            <person name="Winsor E.J.T."/>
            <person name="Grzeschik K.-H."/>
            <person name="Teebi A."/>
            <person name="Minassian B.A."/>
            <person name="Kere J."/>
            <person name="Armengol L."/>
            <person name="Pujana M.A."/>
            <person name="Estivill X."/>
            <person name="Wilson M.D."/>
            <person name="Koop B.F."/>
            <person name="Tosi S."/>
            <person name="Moore G.E."/>
            <person name="Boright A.P."/>
            <person name="Zlotorynski E."/>
            <person name="Kerem B."/>
            <person name="Kroisel P.M."/>
            <person name="Petek E."/>
            <person name="Oscier D.G."/>
            <person name="Mould S.J."/>
            <person name="Doehner H."/>
            <person name="Doehner K."/>
            <person name="Rommens J.M."/>
            <person name="Vincent J.B."/>
            <person name="Venter J.C."/>
            <person name="Li P.W."/>
            <person name="Mural R.J."/>
            <person name="Adams M.D."/>
            <person name="Tsui L.-C."/>
        </authorList>
    </citation>
    <scope>NUCLEOTIDE SEQUENCE [LARGE SCALE GENOMIC DNA]</scope>
</reference>
<reference key="2">
    <citation type="submission" date="2005-07" db="EMBL/GenBank/DDBJ databases">
        <authorList>
            <person name="Mural R.J."/>
            <person name="Istrail S."/>
            <person name="Sutton G.G."/>
            <person name="Florea L."/>
            <person name="Halpern A.L."/>
            <person name="Mobarry C.M."/>
            <person name="Lippert R."/>
            <person name="Walenz B."/>
            <person name="Shatkay H."/>
            <person name="Dew I."/>
            <person name="Miller J.R."/>
            <person name="Flanigan M.J."/>
            <person name="Edwards N.J."/>
            <person name="Bolanos R."/>
            <person name="Fasulo D."/>
            <person name="Halldorsson B.V."/>
            <person name="Hannenhalli S."/>
            <person name="Turner R."/>
            <person name="Yooseph S."/>
            <person name="Lu F."/>
            <person name="Nusskern D.R."/>
            <person name="Shue B.C."/>
            <person name="Zheng X.H."/>
            <person name="Zhong F."/>
            <person name="Delcher A.L."/>
            <person name="Huson D.H."/>
            <person name="Kravitz S.A."/>
            <person name="Mouchard L."/>
            <person name="Reinert K."/>
            <person name="Remington K.A."/>
            <person name="Clark A.G."/>
            <person name="Waterman M.S."/>
            <person name="Eichler E.E."/>
            <person name="Adams M.D."/>
            <person name="Hunkapiller M.W."/>
            <person name="Myers E.W."/>
            <person name="Venter J.C."/>
        </authorList>
    </citation>
    <scope>NUCLEOTIDE SEQUENCE [LARGE SCALE GENOMIC DNA]</scope>
</reference>
<reference key="3">
    <citation type="journal article" date="2004" name="Genome Res.">
        <title>The status, quality, and expansion of the NIH full-length cDNA project: the Mammalian Gene Collection (MGC).</title>
        <authorList>
            <consortium name="The MGC Project Team"/>
        </authorList>
    </citation>
    <scope>NUCLEOTIDE SEQUENCE [LARGE SCALE MRNA]</scope>
    <source>
        <tissue>Testis</tissue>
    </source>
</reference>
<reference key="4">
    <citation type="journal article" date="2016" name="Acta Biochim. Biophys. Sin.">
        <title>Low levels of PRSS37 protein in sperm are associated with many cases of unexplained male infertility.</title>
        <authorList>
            <person name="Liu J."/>
            <person name="Shen C."/>
            <person name="Fan W."/>
            <person name="Chen Y."/>
            <person name="Zhang A."/>
            <person name="Feng Y."/>
            <person name="Li Z."/>
            <person name="Kuang Y."/>
            <person name="Wang Z."/>
        </authorList>
    </citation>
    <scope>FUNCTION</scope>
    <scope>SUBCELLULAR LOCATION</scope>
    <scope>TISSUE SPECIFICITY</scope>
    <scope>INVOLVEMENT IN UNEXPLAINED MALE INFERTILITY</scope>
</reference>
<proteinExistence type="evidence at protein level"/>
<keyword id="KW-0968">Cytoplasmic vesicle</keyword>
<keyword id="KW-1015">Disulfide bond</keyword>
<keyword id="KW-0278">Fertilization</keyword>
<keyword id="KW-1267">Proteomics identification</keyword>
<keyword id="KW-1185">Reference proteome</keyword>
<keyword id="KW-0964">Secreted</keyword>
<keyword id="KW-0732">Signal</keyword>
<name>PRS37_HUMAN</name>
<organism>
    <name type="scientific">Homo sapiens</name>
    <name type="common">Human</name>
    <dbReference type="NCBI Taxonomy" id="9606"/>
    <lineage>
        <taxon>Eukaryota</taxon>
        <taxon>Metazoa</taxon>
        <taxon>Chordata</taxon>
        <taxon>Craniata</taxon>
        <taxon>Vertebrata</taxon>
        <taxon>Euteleostomi</taxon>
        <taxon>Mammalia</taxon>
        <taxon>Eutheria</taxon>
        <taxon>Euarchontoglires</taxon>
        <taxon>Primates</taxon>
        <taxon>Haplorrhini</taxon>
        <taxon>Catarrhini</taxon>
        <taxon>Hominidae</taxon>
        <taxon>Homo</taxon>
    </lineage>
</organism>
<gene>
    <name evidence="6" type="primary">PRSS37</name>
    <name type="synonym">TRYX2</name>
</gene>